<dbReference type="EMBL" id="CP000879">
    <property type="protein sequence ID" value="ABX31834.1"/>
    <property type="molecule type" value="Genomic_DNA"/>
</dbReference>
<dbReference type="RefSeq" id="WP_012208935.1">
    <property type="nucleotide sequence ID" value="NC_010003.1"/>
</dbReference>
<dbReference type="SMR" id="A9BG78"/>
<dbReference type="STRING" id="403833.Pmob_1115"/>
<dbReference type="KEGG" id="pmo:Pmob_1115"/>
<dbReference type="eggNOG" id="COG0341">
    <property type="taxonomic scope" value="Bacteria"/>
</dbReference>
<dbReference type="HOGENOM" id="CLU_050012_0_1_0"/>
<dbReference type="OrthoDB" id="9805019at2"/>
<dbReference type="Proteomes" id="UP000000789">
    <property type="component" value="Chromosome"/>
</dbReference>
<dbReference type="GO" id="GO:0005886">
    <property type="term" value="C:plasma membrane"/>
    <property type="evidence" value="ECO:0007669"/>
    <property type="project" value="UniProtKB-SubCell"/>
</dbReference>
<dbReference type="GO" id="GO:0015450">
    <property type="term" value="F:protein-transporting ATPase activity"/>
    <property type="evidence" value="ECO:0007669"/>
    <property type="project" value="InterPro"/>
</dbReference>
<dbReference type="GO" id="GO:0065002">
    <property type="term" value="P:intracellular protein transmembrane transport"/>
    <property type="evidence" value="ECO:0007669"/>
    <property type="project" value="UniProtKB-UniRule"/>
</dbReference>
<dbReference type="GO" id="GO:0006605">
    <property type="term" value="P:protein targeting"/>
    <property type="evidence" value="ECO:0007669"/>
    <property type="project" value="UniProtKB-UniRule"/>
</dbReference>
<dbReference type="GO" id="GO:0043952">
    <property type="term" value="P:protein transport by the Sec complex"/>
    <property type="evidence" value="ECO:0007669"/>
    <property type="project" value="UniProtKB-UniRule"/>
</dbReference>
<dbReference type="FunFam" id="1.20.1640.10:FF:000024">
    <property type="entry name" value="Multifunctional fusion protein"/>
    <property type="match status" value="1"/>
</dbReference>
<dbReference type="Gene3D" id="1.20.1640.10">
    <property type="entry name" value="Multidrug efflux transporter AcrB transmembrane domain"/>
    <property type="match status" value="1"/>
</dbReference>
<dbReference type="HAMAP" id="MF_01464_B">
    <property type="entry name" value="SecF_B"/>
    <property type="match status" value="1"/>
</dbReference>
<dbReference type="InterPro" id="IPR022813">
    <property type="entry name" value="SecD/SecF_arch_bac"/>
</dbReference>
<dbReference type="InterPro" id="IPR022645">
    <property type="entry name" value="SecD/SecF_bac"/>
</dbReference>
<dbReference type="InterPro" id="IPR022646">
    <property type="entry name" value="SecD/SecF_CS"/>
</dbReference>
<dbReference type="InterPro" id="IPR048634">
    <property type="entry name" value="SecD_SecF_C"/>
</dbReference>
<dbReference type="InterPro" id="IPR055344">
    <property type="entry name" value="SecD_SecF_C_bact"/>
</dbReference>
<dbReference type="InterPro" id="IPR005665">
    <property type="entry name" value="SecF_bac"/>
</dbReference>
<dbReference type="NCBIfam" id="TIGR00916">
    <property type="entry name" value="2A0604s01"/>
    <property type="match status" value="1"/>
</dbReference>
<dbReference type="NCBIfam" id="TIGR00966">
    <property type="entry name" value="transloc_SecF"/>
    <property type="match status" value="1"/>
</dbReference>
<dbReference type="PANTHER" id="PTHR30081:SF8">
    <property type="entry name" value="PROTEIN TRANSLOCASE SUBUNIT SECF"/>
    <property type="match status" value="1"/>
</dbReference>
<dbReference type="PANTHER" id="PTHR30081">
    <property type="entry name" value="PROTEIN-EXPORT MEMBRANE PROTEIN SEC"/>
    <property type="match status" value="1"/>
</dbReference>
<dbReference type="Pfam" id="PF07549">
    <property type="entry name" value="Sec_GG"/>
    <property type="match status" value="1"/>
</dbReference>
<dbReference type="Pfam" id="PF02355">
    <property type="entry name" value="SecD_SecF_C"/>
    <property type="match status" value="1"/>
</dbReference>
<dbReference type="PRINTS" id="PR01755">
    <property type="entry name" value="SECFTRNLCASE"/>
</dbReference>
<dbReference type="SUPFAM" id="SSF82866">
    <property type="entry name" value="Multidrug efflux transporter AcrB transmembrane domain"/>
    <property type="match status" value="1"/>
</dbReference>
<organism>
    <name type="scientific">Petrotoga mobilis (strain DSM 10674 / SJ95)</name>
    <dbReference type="NCBI Taxonomy" id="403833"/>
    <lineage>
        <taxon>Bacteria</taxon>
        <taxon>Thermotogati</taxon>
        <taxon>Thermotogota</taxon>
        <taxon>Thermotogae</taxon>
        <taxon>Petrotogales</taxon>
        <taxon>Petrotogaceae</taxon>
        <taxon>Petrotoga</taxon>
    </lineage>
</organism>
<comment type="function">
    <text evidence="1">Part of the Sec protein translocase complex. Interacts with the SecYEG preprotein conducting channel. SecDF uses the proton motive force (PMF) to complete protein translocation after the ATP-dependent function of SecA.</text>
</comment>
<comment type="subunit">
    <text evidence="1">Forms a complex with SecD. Part of the essential Sec protein translocation apparatus which comprises SecA, SecYEG and auxiliary proteins SecDF. Other proteins may also be involved.</text>
</comment>
<comment type="subcellular location">
    <subcellularLocation>
        <location evidence="1">Cell inner membrane</location>
        <topology evidence="1">Multi-pass membrane protein</topology>
    </subcellularLocation>
</comment>
<comment type="similarity">
    <text evidence="1">Belongs to the SecD/SecF family. SecF subfamily.</text>
</comment>
<evidence type="ECO:0000255" key="1">
    <source>
        <dbReference type="HAMAP-Rule" id="MF_01464"/>
    </source>
</evidence>
<keyword id="KW-0997">Cell inner membrane</keyword>
<keyword id="KW-1003">Cell membrane</keyword>
<keyword id="KW-0472">Membrane</keyword>
<keyword id="KW-0653">Protein transport</keyword>
<keyword id="KW-0811">Translocation</keyword>
<keyword id="KW-0812">Transmembrane</keyword>
<keyword id="KW-1133">Transmembrane helix</keyword>
<keyword id="KW-0813">Transport</keyword>
<sequence>MPNIDFVGKRSFFIYLSIALILFSVIVIFVKGFNLGVDFSGGSEIIVSFDKSYTIDELRNGLQTINQEYATAKIIQTNPGGGASDQFFYIITVRDSFPTLEEKQMFINSLEESFSDSSLNIEQFNDVSGYAAREIRSYAWYAVIISLIVLLAYITIRFQFSYGVGAILALAHDVIITLGFYSLFGIEMNLTAIAAFLTLAGYSLNDTIVVYDRIRENRSKNRGMDIESITNKSINEVIVRSLNTSLTTFLVVFMMFLLGGRSIASFAFGLTVGVIIGTYSSLYIASPIVIGMVKRRKKTQKA</sequence>
<name>SECF_PETMO</name>
<reference key="1">
    <citation type="submission" date="2007-11" db="EMBL/GenBank/DDBJ databases">
        <title>Complete sequence of Petroga mobilis SJ95.</title>
        <authorList>
            <consortium name="US DOE Joint Genome Institute"/>
            <person name="Copeland A."/>
            <person name="Lucas S."/>
            <person name="Lapidus A."/>
            <person name="Barry K."/>
            <person name="Glavina del Rio T."/>
            <person name="Dalin E."/>
            <person name="Tice H."/>
            <person name="Pitluck S."/>
            <person name="Meincke L."/>
            <person name="Brettin T."/>
            <person name="Bruce D."/>
            <person name="Detter J.C."/>
            <person name="Han C."/>
            <person name="Kuske C.R."/>
            <person name="Schmutz J."/>
            <person name="Larimer F."/>
            <person name="Land M."/>
            <person name="Hauser L."/>
            <person name="Kyrpides N."/>
            <person name="Mikhailova N."/>
            <person name="Noll K."/>
            <person name="Richardson P."/>
        </authorList>
    </citation>
    <scope>NUCLEOTIDE SEQUENCE [LARGE SCALE GENOMIC DNA]</scope>
    <source>
        <strain>DSM 10674 / SJ95</strain>
    </source>
</reference>
<gene>
    <name evidence="1" type="primary">secF</name>
    <name type="ordered locus">Pmob_1115</name>
</gene>
<proteinExistence type="inferred from homology"/>
<accession>A9BG78</accession>
<feature type="chain" id="PRO_0000412699" description="Protein translocase subunit SecF">
    <location>
        <begin position="1"/>
        <end position="302"/>
    </location>
</feature>
<feature type="transmembrane region" description="Helical" evidence="1">
    <location>
        <begin position="12"/>
        <end position="32"/>
    </location>
</feature>
<feature type="transmembrane region" description="Helical" evidence="1">
    <location>
        <begin position="138"/>
        <end position="158"/>
    </location>
</feature>
<feature type="transmembrane region" description="Helical" evidence="1">
    <location>
        <begin position="166"/>
        <end position="186"/>
    </location>
</feature>
<feature type="transmembrane region" description="Helical" evidence="1">
    <location>
        <begin position="190"/>
        <end position="210"/>
    </location>
</feature>
<feature type="transmembrane region" description="Helical" evidence="1">
    <location>
        <begin position="249"/>
        <end position="269"/>
    </location>
</feature>
<feature type="transmembrane region" description="Helical" evidence="1">
    <location>
        <begin position="272"/>
        <end position="292"/>
    </location>
</feature>
<protein>
    <recommendedName>
        <fullName>Protein translocase subunit SecF</fullName>
    </recommendedName>
</protein>